<sequence length="30" mass="3222">ANFEIVNNCPYTVWAAASPGGGRRLDRGQT</sequence>
<proteinExistence type="evidence at protein level"/>
<organism>
    <name type="scientific">Phaseolus vulgaris</name>
    <name type="common">Kidney bean</name>
    <name type="synonym">French bean</name>
    <dbReference type="NCBI Taxonomy" id="3885"/>
    <lineage>
        <taxon>Eukaryota</taxon>
        <taxon>Viridiplantae</taxon>
        <taxon>Streptophyta</taxon>
        <taxon>Embryophyta</taxon>
        <taxon>Tracheophyta</taxon>
        <taxon>Spermatophyta</taxon>
        <taxon>Magnoliopsida</taxon>
        <taxon>eudicotyledons</taxon>
        <taxon>Gunneridae</taxon>
        <taxon>Pentapetalae</taxon>
        <taxon>rosids</taxon>
        <taxon>fabids</taxon>
        <taxon>Fabales</taxon>
        <taxon>Fabaceae</taxon>
        <taxon>Papilionoideae</taxon>
        <taxon>50 kb inversion clade</taxon>
        <taxon>NPAAA clade</taxon>
        <taxon>indigoferoid/millettioid clade</taxon>
        <taxon>Phaseoleae</taxon>
        <taxon>Phaseolus</taxon>
    </lineage>
</organism>
<keyword id="KW-0929">Antimicrobial</keyword>
<keyword id="KW-0903">Direct protein sequencing</keyword>
<keyword id="KW-0295">Fungicide</keyword>
<keyword id="KW-0964">Secreted</keyword>
<evidence type="ECO:0000255" key="1">
    <source>
        <dbReference type="PROSITE-ProRule" id="PRU00699"/>
    </source>
</evidence>
<evidence type="ECO:0000269" key="2">
    <source>
    </source>
</evidence>
<evidence type="ECO:0000303" key="3">
    <source>
    </source>
</evidence>
<evidence type="ECO:0000305" key="4"/>
<reference evidence="4" key="1">
    <citation type="journal article" date="1999" name="Biochem. Biophys. Res. Commun.">
        <title>First chromatographic isolation of an antifungal thaumatin-like protein from French bean legumes and demonstration of its antifungal activity.</title>
        <authorList>
            <person name="Ye X.Y."/>
            <person name="Wang H.X."/>
            <person name="Ng T.B."/>
        </authorList>
    </citation>
    <scope>PROTEIN SEQUENCE</scope>
    <scope>FUNCTION</scope>
    <source>
        <strain evidence="2">cv. Kentucky wonder</strain>
    </source>
</reference>
<comment type="function">
    <text evidence="2">Has antifungal activity against C.comatus, F.oxysporum and P.ostreatus.</text>
</comment>
<comment type="subcellular location">
    <subcellularLocation>
        <location>Secreted</location>
    </subcellularLocation>
</comment>
<comment type="similarity">
    <text evidence="1 4">Belongs to the thaumatin family.</text>
</comment>
<dbReference type="SMR" id="P83959"/>
<dbReference type="eggNOG" id="ENOG502QV4N">
    <property type="taxonomic scope" value="Eukaryota"/>
</dbReference>
<dbReference type="GO" id="GO:0005576">
    <property type="term" value="C:extracellular region"/>
    <property type="evidence" value="ECO:0007669"/>
    <property type="project" value="UniProtKB-SubCell"/>
</dbReference>
<dbReference type="GO" id="GO:0050832">
    <property type="term" value="P:defense response to fungus"/>
    <property type="evidence" value="ECO:0007669"/>
    <property type="project" value="UniProtKB-KW"/>
</dbReference>
<dbReference type="GO" id="GO:0031640">
    <property type="term" value="P:killing of cells of another organism"/>
    <property type="evidence" value="ECO:0007669"/>
    <property type="project" value="UniProtKB-KW"/>
</dbReference>
<dbReference type="Gene3D" id="2.60.110.10">
    <property type="entry name" value="Thaumatin"/>
    <property type="match status" value="1"/>
</dbReference>
<dbReference type="InterPro" id="IPR037176">
    <property type="entry name" value="Osmotin/thaumatin-like_sf"/>
</dbReference>
<dbReference type="InterPro" id="IPR001938">
    <property type="entry name" value="Thaumatin"/>
</dbReference>
<dbReference type="PRINTS" id="PR00347">
    <property type="entry name" value="THAUMATIN"/>
</dbReference>
<dbReference type="SUPFAM" id="SSF49870">
    <property type="entry name" value="Osmotin, thaumatin-like protein"/>
    <property type="match status" value="1"/>
</dbReference>
<dbReference type="PROSITE" id="PS51367">
    <property type="entry name" value="THAUMATIN_2"/>
    <property type="match status" value="1"/>
</dbReference>
<protein>
    <recommendedName>
        <fullName>Thaumatin-like protein</fullName>
    </recommendedName>
</protein>
<accession>P83959</accession>
<feature type="chain" id="PRO_0000096229" description="Thaumatin-like protein">
    <location>
        <begin position="1"/>
        <end position="30" status="greater than"/>
    </location>
</feature>
<feature type="non-terminal residue" evidence="3">
    <location>
        <position position="30"/>
    </location>
</feature>
<name>TLP_PHAVU</name>